<sequence length="1380" mass="155605">MSSSVTSTKYVLNSFNSVPRLSYAKSIDIKDSLTDLIKIQRDSYNAFIGIDQNTESGIKNIFQSMFPIQDLLGRAVLEFVSYSIGEPQYDEYECIKRGITFSVPIRIVLRFIVWKVQEVSFKEVKYVVDEETSEKSIKYIKEQEVSIGDLPTMTSHGTFIINGIERVIVSQMHRSPGVFFDSDKGKTYSSGKLIYSARIIPYRGSWLDFEFDIKDILYFRIDRKRKLPVSLLLRALGLSNNDILDTFYDKIRYVKSEKGWVVPFVADRFRGVRLSHDLMDSDGNVLVKANTRITLRMARKLANDGLTKYLVPFNEIQGLFIANDLLDSTGNALIISAGENITSEHINKLELFNIEEIFVLNIDFLTVGPYILNTLFLDKNVSYEDALFEIYKVLRSGESPSLDTIKAFFDGLFFEKERYDLSTVGRIKLNDHLGLNVSEDITVLTKDDIIHVIKKLVLLRDGEGSVDDIDHLGNRRVRSVGEFIENQFRIGILRLERMIMDYMSSVNFDNAMPCDFVNPKVLATVLKDFFSSSQLSQFMDQTNPLSEVTHKRRLSALGPGGLTRERAGFEVRDVHPTHYGRICPIETPEGQNIGLISSLAIYARINKHGFIESPYRKVDKGVVTDKVEYLLAMQESNYYIADASATLDENNQFVDDMLYCRHDGNFVMVKREEVDYIDVSPKQIVSVAASLIPFLENNDANRALMGSNMQRQAVPLLKADAPLIGTGMESIVAAGSGTVVLAKRGGIVHRVDGLYIVIRAFDQEKNEYLGVDIYNLRKFQRSNHNTCINQRPLVKPGDYVKANDVIADGSAIDQGELALGKNVLVAFMSWQGYNFEDSIVISSEVVKKDVFTSIHIEEFECVVRDTTLGPEKIMRSVPDINEDSLSHLDDVGIVNVGAEVSAGDILVGKVTPRPPVSLPPETKLLVTIFGEKVFDCVDSSLYLPLDVEGTVVDVHVFVRRGVEENDRSLLIKQNEINGFIKERDYEIDVVSEYFYDELKRVLVSSGVQYNNQNIDDYLASIPKKEWWDINLSDEAMLLQVKDLKEKFDSMIQNAHSKFDQKIDKLNYGYDLPQGVLCIVKVFVAVKHNLQPGDKMAGRHGNKGVISRIVPVEDMPYLEDGTPVDIILNSLGVPSRMNVGQILETHLGWASVNLGKKIGHILDNLDELTVSHLRNFLYQVYDGQDLKDNIQSMSDEDLLVFAERLRDGVPMAAPVFEGPKDSQISNLLRLADLDVSGQVDLYDGRIGEKFDRKVTVGYIYMLKLHHLVDDKIHARSVGPYGLVTQQPLGGKSHFGGQRFGEMECWALQAYGAAYTLQEMLTVKSDDIVGRVKIYESIIKGDSNFECGIPESFNVMVKELRSLCLDVALKQDKDFLSNEVKD</sequence>
<evidence type="ECO:0000255" key="1">
    <source>
        <dbReference type="HAMAP-Rule" id="MF_01321"/>
    </source>
</evidence>
<evidence type="ECO:0000305" key="2"/>
<reference key="1">
    <citation type="journal article" date="2003" name="Int. J. Syst. Evol. Microbiol.">
        <title>RNA polymerase beta-subunit-based phylogeny of Ehrlichia spp., Anaplasma spp., Neorickettsia spp. and Wolbachia pipientis.</title>
        <authorList>
            <person name="Taillardat-Bisch A.V."/>
            <person name="Raoult D."/>
            <person name="Drancourt M."/>
        </authorList>
    </citation>
    <scope>NUCLEOTIDE SEQUENCE [GENOMIC DNA]</scope>
</reference>
<reference key="2">
    <citation type="journal article" date="2006" name="PLoS Genet.">
        <title>Comparative genomics of emerging human ehrlichiosis agents.</title>
        <authorList>
            <person name="Dunning Hotopp J.C."/>
            <person name="Lin M."/>
            <person name="Madupu R."/>
            <person name="Crabtree J."/>
            <person name="Angiuoli S.V."/>
            <person name="Eisen J.A."/>
            <person name="Seshadri R."/>
            <person name="Ren Q."/>
            <person name="Wu M."/>
            <person name="Utterback T.R."/>
            <person name="Smith S."/>
            <person name="Lewis M."/>
            <person name="Khouri H."/>
            <person name="Zhang C."/>
            <person name="Niu H."/>
            <person name="Lin Q."/>
            <person name="Ohashi N."/>
            <person name="Zhi N."/>
            <person name="Nelson W.C."/>
            <person name="Brinkac L.M."/>
            <person name="Dodson R.J."/>
            <person name="Rosovitz M.J."/>
            <person name="Sundaram J.P."/>
            <person name="Daugherty S.C."/>
            <person name="Davidsen T."/>
            <person name="Durkin A.S."/>
            <person name="Gwinn M.L."/>
            <person name="Haft D.H."/>
            <person name="Selengut J.D."/>
            <person name="Sullivan S.A."/>
            <person name="Zafar N."/>
            <person name="Zhou L."/>
            <person name="Benahmed F."/>
            <person name="Forberger H."/>
            <person name="Halpin R."/>
            <person name="Mulligan S."/>
            <person name="Robinson J."/>
            <person name="White O."/>
            <person name="Rikihisa Y."/>
            <person name="Tettelin H."/>
        </authorList>
    </citation>
    <scope>NUCLEOTIDE SEQUENCE [LARGE SCALE GENOMIC DNA]</scope>
    <source>
        <strain>ATCC CRL-10679 / Arkansas</strain>
    </source>
</reference>
<comment type="function">
    <text evidence="1">DNA-dependent RNA polymerase catalyzes the transcription of DNA into RNA using the four ribonucleoside triphosphates as substrates.</text>
</comment>
<comment type="catalytic activity">
    <reaction evidence="1">
        <text>RNA(n) + a ribonucleoside 5'-triphosphate = RNA(n+1) + diphosphate</text>
        <dbReference type="Rhea" id="RHEA:21248"/>
        <dbReference type="Rhea" id="RHEA-COMP:14527"/>
        <dbReference type="Rhea" id="RHEA-COMP:17342"/>
        <dbReference type="ChEBI" id="CHEBI:33019"/>
        <dbReference type="ChEBI" id="CHEBI:61557"/>
        <dbReference type="ChEBI" id="CHEBI:140395"/>
        <dbReference type="EC" id="2.7.7.6"/>
    </reaction>
</comment>
<comment type="subunit">
    <text evidence="1">The RNAP catalytic core consists of 2 alpha, 1 beta, 1 beta' and 1 omega subunit. When a sigma factor is associated with the core the holoenzyme is formed, which can initiate transcription.</text>
</comment>
<comment type="similarity">
    <text evidence="1">Belongs to the RNA polymerase beta chain family.</text>
</comment>
<gene>
    <name evidence="1" type="primary">rpoB</name>
    <name type="ordered locus">ECH_0952</name>
</gene>
<dbReference type="EC" id="2.7.7.6" evidence="1"/>
<dbReference type="EMBL" id="AF389473">
    <property type="protein sequence ID" value="AAM73635.1"/>
    <property type="molecule type" value="Genomic_DNA"/>
</dbReference>
<dbReference type="EMBL" id="CP000236">
    <property type="protein sequence ID" value="ABD45318.1"/>
    <property type="molecule type" value="Genomic_DNA"/>
</dbReference>
<dbReference type="RefSeq" id="WP_011452916.1">
    <property type="nucleotide sequence ID" value="NC_007799.1"/>
</dbReference>
<dbReference type="SMR" id="Q8KWX2"/>
<dbReference type="STRING" id="205920.ECH_0952"/>
<dbReference type="KEGG" id="ech:ECH_0952"/>
<dbReference type="eggNOG" id="COG0085">
    <property type="taxonomic scope" value="Bacteria"/>
</dbReference>
<dbReference type="HOGENOM" id="CLU_000524_4_0_5"/>
<dbReference type="OrthoDB" id="9803954at2"/>
<dbReference type="Proteomes" id="UP000008320">
    <property type="component" value="Chromosome"/>
</dbReference>
<dbReference type="GO" id="GO:0000428">
    <property type="term" value="C:DNA-directed RNA polymerase complex"/>
    <property type="evidence" value="ECO:0007669"/>
    <property type="project" value="UniProtKB-KW"/>
</dbReference>
<dbReference type="GO" id="GO:0003677">
    <property type="term" value="F:DNA binding"/>
    <property type="evidence" value="ECO:0007669"/>
    <property type="project" value="UniProtKB-UniRule"/>
</dbReference>
<dbReference type="GO" id="GO:0003899">
    <property type="term" value="F:DNA-directed RNA polymerase activity"/>
    <property type="evidence" value="ECO:0007669"/>
    <property type="project" value="UniProtKB-UniRule"/>
</dbReference>
<dbReference type="GO" id="GO:0032549">
    <property type="term" value="F:ribonucleoside binding"/>
    <property type="evidence" value="ECO:0007669"/>
    <property type="project" value="InterPro"/>
</dbReference>
<dbReference type="GO" id="GO:0006351">
    <property type="term" value="P:DNA-templated transcription"/>
    <property type="evidence" value="ECO:0007669"/>
    <property type="project" value="UniProtKB-UniRule"/>
</dbReference>
<dbReference type="CDD" id="cd00653">
    <property type="entry name" value="RNA_pol_B_RPB2"/>
    <property type="match status" value="1"/>
</dbReference>
<dbReference type="Gene3D" id="2.40.50.100">
    <property type="match status" value="1"/>
</dbReference>
<dbReference type="Gene3D" id="2.40.50.150">
    <property type="match status" value="1"/>
</dbReference>
<dbReference type="Gene3D" id="3.90.1100.10">
    <property type="match status" value="2"/>
</dbReference>
<dbReference type="Gene3D" id="2.30.150.10">
    <property type="entry name" value="DNA-directed RNA polymerase, beta subunit, external 1 domain"/>
    <property type="match status" value="1"/>
</dbReference>
<dbReference type="Gene3D" id="2.40.270.10">
    <property type="entry name" value="DNA-directed RNA polymerase, subunit 2, domain 6"/>
    <property type="match status" value="1"/>
</dbReference>
<dbReference type="Gene3D" id="3.90.1800.10">
    <property type="entry name" value="RNA polymerase alpha subunit dimerisation domain"/>
    <property type="match status" value="1"/>
</dbReference>
<dbReference type="HAMAP" id="MF_01321">
    <property type="entry name" value="RNApol_bact_RpoB"/>
    <property type="match status" value="1"/>
</dbReference>
<dbReference type="InterPro" id="IPR042107">
    <property type="entry name" value="DNA-dir_RNA_pol_bsu_ext_1_sf"/>
</dbReference>
<dbReference type="InterPro" id="IPR019462">
    <property type="entry name" value="DNA-dir_RNA_pol_bsu_external_1"/>
</dbReference>
<dbReference type="InterPro" id="IPR015712">
    <property type="entry name" value="DNA-dir_RNA_pol_su2"/>
</dbReference>
<dbReference type="InterPro" id="IPR007120">
    <property type="entry name" value="DNA-dir_RNAP_su2_dom"/>
</dbReference>
<dbReference type="InterPro" id="IPR037033">
    <property type="entry name" value="DNA-dir_RNAP_su2_hyb_sf"/>
</dbReference>
<dbReference type="InterPro" id="IPR010243">
    <property type="entry name" value="RNA_pol_bsu_bac"/>
</dbReference>
<dbReference type="InterPro" id="IPR007121">
    <property type="entry name" value="RNA_pol_bsu_CS"/>
</dbReference>
<dbReference type="InterPro" id="IPR007644">
    <property type="entry name" value="RNA_pol_bsu_protrusion"/>
</dbReference>
<dbReference type="InterPro" id="IPR007642">
    <property type="entry name" value="RNA_pol_Rpb2_2"/>
</dbReference>
<dbReference type="InterPro" id="IPR007645">
    <property type="entry name" value="RNA_pol_Rpb2_3"/>
</dbReference>
<dbReference type="InterPro" id="IPR007641">
    <property type="entry name" value="RNA_pol_Rpb2_7"/>
</dbReference>
<dbReference type="InterPro" id="IPR014724">
    <property type="entry name" value="RNA_pol_RPB2_OB-fold"/>
</dbReference>
<dbReference type="NCBIfam" id="NF001616">
    <property type="entry name" value="PRK00405.1"/>
    <property type="match status" value="1"/>
</dbReference>
<dbReference type="NCBIfam" id="TIGR02013">
    <property type="entry name" value="rpoB"/>
    <property type="match status" value="1"/>
</dbReference>
<dbReference type="PANTHER" id="PTHR20856">
    <property type="entry name" value="DNA-DIRECTED RNA POLYMERASE I SUBUNIT 2"/>
    <property type="match status" value="1"/>
</dbReference>
<dbReference type="Pfam" id="PF04563">
    <property type="entry name" value="RNA_pol_Rpb2_1"/>
    <property type="match status" value="1"/>
</dbReference>
<dbReference type="Pfam" id="PF04561">
    <property type="entry name" value="RNA_pol_Rpb2_2"/>
    <property type="match status" value="2"/>
</dbReference>
<dbReference type="Pfam" id="PF04565">
    <property type="entry name" value="RNA_pol_Rpb2_3"/>
    <property type="match status" value="1"/>
</dbReference>
<dbReference type="Pfam" id="PF10385">
    <property type="entry name" value="RNA_pol_Rpb2_45"/>
    <property type="match status" value="1"/>
</dbReference>
<dbReference type="Pfam" id="PF00562">
    <property type="entry name" value="RNA_pol_Rpb2_6"/>
    <property type="match status" value="1"/>
</dbReference>
<dbReference type="Pfam" id="PF04560">
    <property type="entry name" value="RNA_pol_Rpb2_7"/>
    <property type="match status" value="1"/>
</dbReference>
<dbReference type="SUPFAM" id="SSF64484">
    <property type="entry name" value="beta and beta-prime subunits of DNA dependent RNA-polymerase"/>
    <property type="match status" value="1"/>
</dbReference>
<dbReference type="PROSITE" id="PS01166">
    <property type="entry name" value="RNA_POL_BETA"/>
    <property type="match status" value="2"/>
</dbReference>
<accession>Q8KWX2</accession>
<accession>Q2GFP3</accession>
<feature type="chain" id="PRO_0000047895" description="DNA-directed RNA polymerase subunit beta">
    <location>
        <begin position="1"/>
        <end position="1380"/>
    </location>
</feature>
<feature type="sequence conflict" description="In Ref. 1; AAM73635." evidence="2" ref="1">
    <original>L</original>
    <variation>I</variation>
    <location>
        <position position="21"/>
    </location>
</feature>
<feature type="sequence conflict" description="In Ref. 1; AAM73635." evidence="2" ref="1">
    <original>FI</original>
    <variation>V</variation>
    <location>
        <begin position="320"/>
        <end position="321"/>
    </location>
</feature>
<feature type="sequence conflict" description="In Ref. 1; AAM73635." evidence="2" ref="1">
    <original>LL</original>
    <variation>FP</variation>
    <location>
        <begin position="325"/>
        <end position="326"/>
    </location>
</feature>
<feature type="sequence conflict" description="In Ref. 1; AAM73635." evidence="2" ref="1">
    <original>EEIFVLNIDFLT</original>
    <variation>GNLWFKDGPGI</variation>
    <location>
        <begin position="355"/>
        <end position="366"/>
    </location>
</feature>
<feature type="sequence conflict" description="In Ref. 1; AAM73635." evidence="2" ref="1">
    <original>DTIKAF</original>
    <variation>TYKSL</variation>
    <location>
        <begin position="403"/>
        <end position="408"/>
    </location>
</feature>
<feature type="sequence conflict" description="In Ref. 1; AAM73635." evidence="2" ref="1">
    <original>LF</original>
    <variation>FI</variation>
    <location>
        <begin position="412"/>
        <end position="413"/>
    </location>
</feature>
<feature type="sequence conflict" description="In Ref. 1; AAM73635." evidence="2" ref="1">
    <original>ER</original>
    <variation>GK</variation>
    <location>
        <begin position="417"/>
        <end position="418"/>
    </location>
</feature>
<feature type="sequence conflict" description="In Ref. 1; AAM73635." evidence="2" ref="1">
    <original>G</original>
    <variation>S</variation>
    <location>
        <position position="558"/>
    </location>
</feature>
<feature type="sequence conflict" description="In Ref. 1; AAM73635." evidence="2" ref="1">
    <original>NEIN</original>
    <variation>MNH</variation>
    <location>
        <begin position="974"/>
        <end position="977"/>
    </location>
</feature>
<feature type="sequence conflict" description="In Ref. 1; AAM73635." evidence="2" ref="1">
    <original>N</original>
    <variation>T</variation>
    <location>
        <position position="1011"/>
    </location>
</feature>
<feature type="sequence conflict" description="In Ref. 1; AAM73635." evidence="2" ref="1">
    <original>PGDKMA</original>
    <variation>AQEIKWL</variation>
    <location>
        <begin position="1091"/>
        <end position="1096"/>
    </location>
</feature>
<feature type="sequence conflict" description="In Ref. 1; AAM73635." evidence="2" ref="1">
    <original>GNK</original>
    <variation>VIQ</variation>
    <location>
        <begin position="1100"/>
        <end position="1102"/>
    </location>
</feature>
<feature type="sequence conflict" description="In Ref. 1; AAM73635." evidence="2" ref="1">
    <original>V</original>
    <variation>C</variation>
    <location>
        <position position="1123"/>
    </location>
</feature>
<feature type="sequence conflict" description="In Ref. 1; AAM73635." evidence="2" ref="1">
    <original>LGVPS</original>
    <variation>FGVYLL</variation>
    <location>
        <begin position="1130"/>
        <end position="1134"/>
    </location>
</feature>
<protein>
    <recommendedName>
        <fullName evidence="1">DNA-directed RNA polymerase subunit beta</fullName>
        <shortName evidence="1">RNAP subunit beta</shortName>
        <ecNumber evidence="1">2.7.7.6</ecNumber>
    </recommendedName>
    <alternativeName>
        <fullName evidence="1">RNA polymerase subunit beta</fullName>
    </alternativeName>
    <alternativeName>
        <fullName evidence="1">Transcriptase subunit beta</fullName>
    </alternativeName>
</protein>
<keyword id="KW-0240">DNA-directed RNA polymerase</keyword>
<keyword id="KW-0548">Nucleotidyltransferase</keyword>
<keyword id="KW-1185">Reference proteome</keyword>
<keyword id="KW-0804">Transcription</keyword>
<keyword id="KW-0808">Transferase</keyword>
<name>RPOB_EHRCR</name>
<proteinExistence type="inferred from homology"/>
<organism>
    <name type="scientific">Ehrlichia chaffeensis (strain ATCC CRL-10679 / Arkansas)</name>
    <dbReference type="NCBI Taxonomy" id="205920"/>
    <lineage>
        <taxon>Bacteria</taxon>
        <taxon>Pseudomonadati</taxon>
        <taxon>Pseudomonadota</taxon>
        <taxon>Alphaproteobacteria</taxon>
        <taxon>Rickettsiales</taxon>
        <taxon>Anaplasmataceae</taxon>
        <taxon>Ehrlichia</taxon>
    </lineage>
</organism>